<sequence>MQLSRWLFSTNHKDIGTLYLIFGAWAGMVGTAMSVIIRAELAQPGSLLNDDQIYNVVVTAHALVMIFFMVMPIMIGGFGNWLIPLMIGAPDMAFPRMNNMSFWLIPPSFILLLASAGVENGAGTGWTIYPPLSSNITHAGSSVDLAIFSLHLAGASSILGLINFITTIINMRTPGMSLDRLPLFVWSVFVTAFLLLLSLPVLAGAITMLLTDRNINTTFFDPAGGGDPILFQHLFWLFGHPEVYILILPGFGMISHVIAHYSGKREPFGYLGLVYAMIAIGVLGFLVWAHHMFTVGMDVDTRAYFTAATMIIAVPTGLKVFSWMAKLQGSNLQWSLPLLWTLGIVFLFTLGGLTGIVLANSSIDFVLHDTYYVVAHFHYVLSMGAVFAIFAGFTHWFPLFSGYSLHPLWGKVHFFIMFVGVNLTFFPQHFLGLAGMPRRYSDYPDAYTLWNTISSIGSTISVVAMLFFLFLIWEAFASQREGITPEFSHASLEWQYTSFPPSHHTFDETPSTIIIVK</sequence>
<dbReference type="EC" id="7.1.1.9"/>
<dbReference type="EMBL" id="X12631">
    <property type="protein sequence ID" value="CAA31153.1"/>
    <property type="molecule type" value="Genomic_DNA"/>
</dbReference>
<dbReference type="PIR" id="S01501">
    <property type="entry name" value="S01501"/>
</dbReference>
<dbReference type="SMR" id="P15544"/>
<dbReference type="FunCoup" id="P15544">
    <property type="interactions" value="18"/>
</dbReference>
<dbReference type="STRING" id="7668.P15544"/>
<dbReference type="EnsemblMetazoa" id="GeneID_2652718_df_mr">
    <property type="protein sequence ID" value="NP_006967"/>
    <property type="gene ID" value="GeneID_2652718"/>
</dbReference>
<dbReference type="KEGG" id="spu:2652718"/>
<dbReference type="CTD" id="4512"/>
<dbReference type="InParanoid" id="P15544"/>
<dbReference type="OMA" id="WAMMSIG"/>
<dbReference type="OrthoDB" id="10002679at2759"/>
<dbReference type="PhylomeDB" id="P15544"/>
<dbReference type="UniPathway" id="UPA00705"/>
<dbReference type="Proteomes" id="UP000007110">
    <property type="component" value="Unassembled WGS sequence"/>
</dbReference>
<dbReference type="GO" id="GO:0005743">
    <property type="term" value="C:mitochondrial inner membrane"/>
    <property type="evidence" value="ECO:0007669"/>
    <property type="project" value="UniProtKB-SubCell"/>
</dbReference>
<dbReference type="GO" id="GO:0045277">
    <property type="term" value="C:respiratory chain complex IV"/>
    <property type="evidence" value="ECO:0000318"/>
    <property type="project" value="GO_Central"/>
</dbReference>
<dbReference type="GO" id="GO:0004129">
    <property type="term" value="F:cytochrome-c oxidase activity"/>
    <property type="evidence" value="ECO:0007669"/>
    <property type="project" value="UniProtKB-EC"/>
</dbReference>
<dbReference type="GO" id="GO:0020037">
    <property type="term" value="F:heme binding"/>
    <property type="evidence" value="ECO:0007669"/>
    <property type="project" value="InterPro"/>
</dbReference>
<dbReference type="GO" id="GO:0046872">
    <property type="term" value="F:metal ion binding"/>
    <property type="evidence" value="ECO:0007669"/>
    <property type="project" value="UniProtKB-KW"/>
</dbReference>
<dbReference type="GO" id="GO:0009060">
    <property type="term" value="P:aerobic respiration"/>
    <property type="evidence" value="ECO:0000318"/>
    <property type="project" value="GO_Central"/>
</dbReference>
<dbReference type="GO" id="GO:0006119">
    <property type="term" value="P:oxidative phosphorylation"/>
    <property type="evidence" value="ECO:0007669"/>
    <property type="project" value="UniProtKB-UniPathway"/>
</dbReference>
<dbReference type="GO" id="GO:0022904">
    <property type="term" value="P:respiratory electron transport chain"/>
    <property type="evidence" value="ECO:0000318"/>
    <property type="project" value="GO_Central"/>
</dbReference>
<dbReference type="CDD" id="cd01663">
    <property type="entry name" value="Cyt_c_Oxidase_I"/>
    <property type="match status" value="1"/>
</dbReference>
<dbReference type="FunFam" id="1.20.210.10:FF:000001">
    <property type="entry name" value="Cytochrome c oxidase subunit 1"/>
    <property type="match status" value="1"/>
</dbReference>
<dbReference type="Gene3D" id="1.20.210.10">
    <property type="entry name" value="Cytochrome c oxidase-like, subunit I domain"/>
    <property type="match status" value="1"/>
</dbReference>
<dbReference type="InterPro" id="IPR023616">
    <property type="entry name" value="Cyt_c_oxase-like_su1_dom"/>
</dbReference>
<dbReference type="InterPro" id="IPR036927">
    <property type="entry name" value="Cyt_c_oxase-like_su1_sf"/>
</dbReference>
<dbReference type="InterPro" id="IPR000883">
    <property type="entry name" value="Cyt_C_Oxase_1"/>
</dbReference>
<dbReference type="InterPro" id="IPR023615">
    <property type="entry name" value="Cyt_c_Oxase_su1_BS"/>
</dbReference>
<dbReference type="InterPro" id="IPR033944">
    <property type="entry name" value="Cyt_c_oxase_su1_dom"/>
</dbReference>
<dbReference type="PANTHER" id="PTHR10422">
    <property type="entry name" value="CYTOCHROME C OXIDASE SUBUNIT 1"/>
    <property type="match status" value="1"/>
</dbReference>
<dbReference type="PANTHER" id="PTHR10422:SF18">
    <property type="entry name" value="CYTOCHROME C OXIDASE SUBUNIT 1"/>
    <property type="match status" value="1"/>
</dbReference>
<dbReference type="Pfam" id="PF00115">
    <property type="entry name" value="COX1"/>
    <property type="match status" value="1"/>
</dbReference>
<dbReference type="PRINTS" id="PR01165">
    <property type="entry name" value="CYCOXIDASEI"/>
</dbReference>
<dbReference type="SUPFAM" id="SSF81442">
    <property type="entry name" value="Cytochrome c oxidase subunit I-like"/>
    <property type="match status" value="1"/>
</dbReference>
<dbReference type="PROSITE" id="PS50855">
    <property type="entry name" value="COX1"/>
    <property type="match status" value="1"/>
</dbReference>
<dbReference type="PROSITE" id="PS00077">
    <property type="entry name" value="COX1_CUB"/>
    <property type="match status" value="1"/>
</dbReference>
<proteinExistence type="inferred from homology"/>
<protein>
    <recommendedName>
        <fullName>Cytochrome c oxidase subunit 1</fullName>
        <ecNumber>7.1.1.9</ecNumber>
    </recommendedName>
    <alternativeName>
        <fullName>Cytochrome c oxidase polypeptide I</fullName>
    </alternativeName>
</protein>
<accession>P15544</accession>
<feature type="chain" id="PRO_0000183423" description="Cytochrome c oxidase subunit 1">
    <location>
        <begin position="1"/>
        <end position="517"/>
    </location>
</feature>
<feature type="transmembrane region" description="Helical" evidence="3">
    <location>
        <begin position="17"/>
        <end position="37"/>
    </location>
</feature>
<feature type="transmembrane region" description="Helical" evidence="3">
    <location>
        <begin position="63"/>
        <end position="83"/>
    </location>
</feature>
<feature type="transmembrane region" description="Helical" evidence="3">
    <location>
        <begin position="102"/>
        <end position="122"/>
    </location>
</feature>
<feature type="transmembrane region" description="Helical" evidence="3">
    <location>
        <begin position="145"/>
        <end position="165"/>
    </location>
</feature>
<feature type="transmembrane region" description="Helical" evidence="3">
    <location>
        <begin position="183"/>
        <end position="203"/>
    </location>
</feature>
<feature type="transmembrane region" description="Helical" evidence="3">
    <location>
        <begin position="234"/>
        <end position="254"/>
    </location>
</feature>
<feature type="transmembrane region" description="Helical" evidence="3">
    <location>
        <begin position="268"/>
        <end position="288"/>
    </location>
</feature>
<feature type="transmembrane region" description="Helical" evidence="3">
    <location>
        <begin position="305"/>
        <end position="325"/>
    </location>
</feature>
<feature type="transmembrane region" description="Helical" evidence="3">
    <location>
        <begin position="338"/>
        <end position="358"/>
    </location>
</feature>
<feature type="transmembrane region" description="Helical" evidence="3">
    <location>
        <begin position="380"/>
        <end position="400"/>
    </location>
</feature>
<feature type="transmembrane region" description="Helical" evidence="3">
    <location>
        <begin position="414"/>
        <end position="434"/>
    </location>
</feature>
<feature type="transmembrane region" description="Helical" evidence="3">
    <location>
        <begin position="456"/>
        <end position="476"/>
    </location>
</feature>
<feature type="binding site" evidence="2">
    <location>
        <position position="40"/>
    </location>
    <ligand>
        <name>Ca(2+)</name>
        <dbReference type="ChEBI" id="CHEBI:29108"/>
    </ligand>
</feature>
<feature type="binding site" evidence="2">
    <location>
        <position position="45"/>
    </location>
    <ligand>
        <name>Ca(2+)</name>
        <dbReference type="ChEBI" id="CHEBI:29108"/>
    </ligand>
</feature>
<feature type="binding site" description="axial binding residue" evidence="2">
    <location>
        <position position="61"/>
    </location>
    <ligand>
        <name>Fe(II)-heme a</name>
        <dbReference type="ChEBI" id="CHEBI:61715"/>
        <note>low-spin</note>
    </ligand>
    <ligandPart>
        <name>Fe</name>
        <dbReference type="ChEBI" id="CHEBI:18248"/>
    </ligandPart>
</feature>
<feature type="binding site" evidence="2">
    <location>
        <position position="240"/>
    </location>
    <ligand>
        <name>Cu cation</name>
        <dbReference type="ChEBI" id="CHEBI:23378"/>
        <label>B</label>
    </ligand>
</feature>
<feature type="binding site" evidence="1">
    <location>
        <position position="244"/>
    </location>
    <ligand>
        <name>O2</name>
        <dbReference type="ChEBI" id="CHEBI:15379"/>
    </ligand>
</feature>
<feature type="binding site" evidence="2">
    <location>
        <position position="290"/>
    </location>
    <ligand>
        <name>Cu cation</name>
        <dbReference type="ChEBI" id="CHEBI:23378"/>
        <label>B</label>
    </ligand>
</feature>
<feature type="binding site" evidence="2">
    <location>
        <position position="291"/>
    </location>
    <ligand>
        <name>Cu cation</name>
        <dbReference type="ChEBI" id="CHEBI:23378"/>
        <label>B</label>
    </ligand>
</feature>
<feature type="binding site" evidence="2">
    <location>
        <position position="368"/>
    </location>
    <ligand>
        <name>Mg(2+)</name>
        <dbReference type="ChEBI" id="CHEBI:18420"/>
        <note>ligand shared with subunit 2</note>
    </ligand>
</feature>
<feature type="binding site" evidence="2">
    <location>
        <position position="369"/>
    </location>
    <ligand>
        <name>Mg(2+)</name>
        <dbReference type="ChEBI" id="CHEBI:18420"/>
        <note>ligand shared with subunit 2</note>
    </ligand>
</feature>
<feature type="binding site" description="axial binding residue" evidence="2">
    <location>
        <position position="376"/>
    </location>
    <ligand>
        <name>heme a3</name>
        <dbReference type="ChEBI" id="CHEBI:83282"/>
        <note>high-spin</note>
    </ligand>
    <ligandPart>
        <name>Fe</name>
        <dbReference type="ChEBI" id="CHEBI:18248"/>
    </ligandPart>
</feature>
<feature type="binding site" description="axial binding residue" evidence="2">
    <location>
        <position position="378"/>
    </location>
    <ligand>
        <name>Fe(II)-heme a</name>
        <dbReference type="ChEBI" id="CHEBI:61715"/>
        <note>low-spin</note>
    </ligand>
    <ligandPart>
        <name>Fe</name>
        <dbReference type="ChEBI" id="CHEBI:18248"/>
    </ligandPart>
</feature>
<feature type="cross-link" description="1'-histidyl-3'-tyrosine (His-Tyr)" evidence="2">
    <location>
        <begin position="240"/>
        <end position="244"/>
    </location>
</feature>
<name>COX1_STRPU</name>
<reference key="1">
    <citation type="journal article" date="1988" name="J. Mol. Biol.">
        <title>Nucleotide sequence and gene organization of sea urchin mitochondrial DNA.</title>
        <authorList>
            <person name="Jacobs H.T."/>
            <person name="Elliott D.J."/>
            <person name="Math V.B."/>
            <person name="Farquharson A."/>
        </authorList>
    </citation>
    <scope>NUCLEOTIDE SEQUENCE [GENOMIC DNA]</scope>
    <source>
        <tissue>Egg</tissue>
    </source>
</reference>
<reference key="2">
    <citation type="journal article" date="1990" name="J. Mol. Biol.">
        <authorList>
            <person name="Jacobs H.T."/>
            <person name="Elliott D.J."/>
            <person name="Math V.B."/>
            <person name="Farquharson A."/>
        </authorList>
    </citation>
    <scope>ERRATUM OF PUBMED:3172215</scope>
    <scope>SEQUENCE REVISION TO 61-62</scope>
</reference>
<evidence type="ECO:0000250" key="1">
    <source>
        <dbReference type="UniProtKB" id="P00396"/>
    </source>
</evidence>
<evidence type="ECO:0000250" key="2">
    <source>
        <dbReference type="UniProtKB" id="P00401"/>
    </source>
</evidence>
<evidence type="ECO:0000255" key="3"/>
<evidence type="ECO:0000305" key="4"/>
<organism>
    <name type="scientific">Strongylocentrotus purpuratus</name>
    <name type="common">Purple sea urchin</name>
    <dbReference type="NCBI Taxonomy" id="7668"/>
    <lineage>
        <taxon>Eukaryota</taxon>
        <taxon>Metazoa</taxon>
        <taxon>Echinodermata</taxon>
        <taxon>Eleutherozoa</taxon>
        <taxon>Echinozoa</taxon>
        <taxon>Echinoidea</taxon>
        <taxon>Euechinoidea</taxon>
        <taxon>Echinacea</taxon>
        <taxon>Camarodonta</taxon>
        <taxon>Echinidea</taxon>
        <taxon>Strongylocentrotidae</taxon>
        <taxon>Strongylocentrotus</taxon>
    </lineage>
</organism>
<geneLocation type="mitochondrion"/>
<keyword id="KW-0106">Calcium</keyword>
<keyword id="KW-0186">Copper</keyword>
<keyword id="KW-0249">Electron transport</keyword>
<keyword id="KW-0349">Heme</keyword>
<keyword id="KW-0408">Iron</keyword>
<keyword id="KW-0460">Magnesium</keyword>
<keyword id="KW-0472">Membrane</keyword>
<keyword id="KW-0479">Metal-binding</keyword>
<keyword id="KW-0496">Mitochondrion</keyword>
<keyword id="KW-0999">Mitochondrion inner membrane</keyword>
<keyword id="KW-1185">Reference proteome</keyword>
<keyword id="KW-0679">Respiratory chain</keyword>
<keyword id="KW-1278">Translocase</keyword>
<keyword id="KW-0812">Transmembrane</keyword>
<keyword id="KW-1133">Transmembrane helix</keyword>
<keyword id="KW-0813">Transport</keyword>
<gene>
    <name type="primary">COI</name>
</gene>
<comment type="function">
    <text evidence="2">Component of the cytochrome c oxidase, the last enzyme in the mitochondrial electron transport chain which drives oxidative phosphorylation. The respiratory chain contains 3 multisubunit complexes succinate dehydrogenase (complex II, CII), ubiquinol-cytochrome c oxidoreductase (cytochrome b-c1 complex, complex III, CIII) and cytochrome c oxidase (complex IV, CIV), that cooperate to transfer electrons derived from NADH and succinate to molecular oxygen, creating an electrochemical gradient over the inner membrane that drives transmembrane transport and the ATP synthase. Cytochrome c oxidase is the component of the respiratory chain that catalyzes the reduction of oxygen to water. Electrons originating from reduced cytochrome c in the intermembrane space (IMS) are transferred via the dinuclear copper A center (CU(A)) of subunit 2 and heme A of subunit 1 to the active site in subunit 1, a binuclear center (BNC) formed by heme A3 and copper B (CU(B)). The BNC reduces molecular oxygen to 2 water molecules using 4 electrons from cytochrome c in the IMS and 4 protons from the mitochondrial matrix.</text>
</comment>
<comment type="catalytic activity">
    <reaction evidence="2">
        <text>4 Fe(II)-[cytochrome c] + O2 + 8 H(+)(in) = 4 Fe(III)-[cytochrome c] + 2 H2O + 4 H(+)(out)</text>
        <dbReference type="Rhea" id="RHEA:11436"/>
        <dbReference type="Rhea" id="RHEA-COMP:10350"/>
        <dbReference type="Rhea" id="RHEA-COMP:14399"/>
        <dbReference type="ChEBI" id="CHEBI:15377"/>
        <dbReference type="ChEBI" id="CHEBI:15378"/>
        <dbReference type="ChEBI" id="CHEBI:15379"/>
        <dbReference type="ChEBI" id="CHEBI:29033"/>
        <dbReference type="ChEBI" id="CHEBI:29034"/>
        <dbReference type="EC" id="7.1.1.9"/>
    </reaction>
    <physiologicalReaction direction="left-to-right" evidence="2">
        <dbReference type="Rhea" id="RHEA:11437"/>
    </physiologicalReaction>
</comment>
<comment type="cofactor">
    <cofactor evidence="2">
        <name>heme</name>
        <dbReference type="ChEBI" id="CHEBI:30413"/>
    </cofactor>
    <text evidence="2">Binds 2 heme A groups non-covalently per subunit.</text>
</comment>
<comment type="cofactor">
    <cofactor evidence="2">
        <name>Cu cation</name>
        <dbReference type="ChEBI" id="CHEBI:23378"/>
    </cofactor>
    <text evidence="2">Binds a copper B center.</text>
</comment>
<comment type="pathway">
    <text evidence="2">Energy metabolism; oxidative phosphorylation.</text>
</comment>
<comment type="subunit">
    <text evidence="2">Component of the cytochrome c oxidase (complex IV, CIV), a multisubunit enzyme composed of a catalytic core of 3 subunits and several supernumerary subunits. The complex exists as a monomer or a dimer and forms supercomplexes (SCs) in the inner mitochondrial membrane with ubiquinol-cytochrome c oxidoreductase (cytochrome b-c1 complex, complex III, CIII).</text>
</comment>
<comment type="subcellular location">
    <subcellularLocation>
        <location evidence="2">Mitochondrion inner membrane</location>
        <topology evidence="2">Multi-pass membrane protein</topology>
    </subcellularLocation>
</comment>
<comment type="similarity">
    <text evidence="4">Belongs to the heme-copper respiratory oxidase family.</text>
</comment>